<accession>Q76M99</accession>
<comment type="function">
    <text evidence="4 5">Renal transmembrane organic anion/dicarboxylate exchanger that participates in the reabsorption of conjugated steroids, as well as bile acids, driven by an outward gradient of dicarboxylates such as glutarate or succinate (PubMed:16079298). Transports estrone 3-sulfate and estradiol-17-glucuronide (17beta-estradiol 17-O-(beta-D-glucuronate)), but not androstanediol glucuronide (5alpha-androstane-3alpha,17beta-diol 3-O-(beta-D-glucuronate)), nor taurocholate (PubMed:31553721). Prefers sulfate conjugates of steroids rather than glucuronide conjugates (PubMed:16079298).</text>
</comment>
<comment type="catalytic activity">
    <reaction evidence="7 8">
        <text>estrone 3-sulfate(out) + glutarate(in) = estrone 3-sulfate(in) + glutarate(out)</text>
        <dbReference type="Rhea" id="RHEA:72151"/>
        <dbReference type="ChEBI" id="CHEBI:30921"/>
        <dbReference type="ChEBI" id="CHEBI:60050"/>
    </reaction>
</comment>
<comment type="catalytic activity">
    <reaction evidence="8">
        <text>17beta-estradiol 17-O-(beta-D-glucuronate)(out) + glutarate(in) = 17beta-estradiol 17-O-(beta-D-glucuronate)(in) + glutarate(out)</text>
        <dbReference type="Rhea" id="RHEA:72155"/>
        <dbReference type="ChEBI" id="CHEBI:30921"/>
        <dbReference type="ChEBI" id="CHEBI:82961"/>
    </reaction>
</comment>
<comment type="catalytic activity">
    <reaction evidence="1">
        <text>dehydroepiandrosterone 3-sulfate(out) + glutarate(in) = dehydroepiandrosterone 3-sulfate(in) + glutarate(out)</text>
        <dbReference type="Rhea" id="RHEA:72355"/>
        <dbReference type="ChEBI" id="CHEBI:30921"/>
        <dbReference type="ChEBI" id="CHEBI:57905"/>
    </reaction>
</comment>
<comment type="biophysicochemical properties">
    <kinetics>
        <KM evidence="4">18.9 uM for estrone 3-sulfate</KM>
    </kinetics>
</comment>
<comment type="subcellular location">
    <subcellularLocation>
        <location evidence="5">Cell membrane</location>
        <topology evidence="2">Multi-pass membrane protein</topology>
    </subcellularLocation>
</comment>
<comment type="tissue specificity">
    <text evidence="4">Localized to the kidney (PubMed:16079298). Mainly expressed in the late segments of proximal tubules (PubMed:16079298).</text>
</comment>
<dbReference type="EMBL" id="AB051836">
    <property type="protein sequence ID" value="BAB78471.1"/>
    <property type="molecule type" value="mRNA"/>
</dbReference>
<dbReference type="EMBL" id="CH473953">
    <property type="protein sequence ID" value="EDM12691.1"/>
    <property type="molecule type" value="Genomic_DNA"/>
</dbReference>
<dbReference type="RefSeq" id="NP_775424.1">
    <property type="nucleotide sequence ID" value="NM_173302.1"/>
</dbReference>
<dbReference type="SMR" id="Q76M99"/>
<dbReference type="iPTMnet" id="Q76M99"/>
<dbReference type="PhosphoSitePlus" id="Q76M99"/>
<dbReference type="Ensembl" id="ENSRNOT00000091992.2">
    <property type="protein sequence ID" value="ENSRNOP00000085742.1"/>
    <property type="gene ID" value="ENSRNOG00000056396.2"/>
</dbReference>
<dbReference type="GeneID" id="286961"/>
<dbReference type="KEGG" id="rno:286961"/>
<dbReference type="UCSC" id="RGD:628885">
    <property type="organism name" value="rat"/>
</dbReference>
<dbReference type="AGR" id="RGD:628885"/>
<dbReference type="CTD" id="207151"/>
<dbReference type="RGD" id="628885">
    <property type="gene designation" value="Slc22a24"/>
</dbReference>
<dbReference type="GeneTree" id="ENSGT00940000161239"/>
<dbReference type="OMA" id="VEWITHR"/>
<dbReference type="OrthoDB" id="2544694at2759"/>
<dbReference type="TreeFam" id="TF315847"/>
<dbReference type="PRO" id="PR:Q76M99"/>
<dbReference type="Proteomes" id="UP000002494">
    <property type="component" value="Chromosome 1"/>
</dbReference>
<dbReference type="Proteomes" id="UP000234681">
    <property type="component" value="Chromosome 1"/>
</dbReference>
<dbReference type="GO" id="GO:0016324">
    <property type="term" value="C:apical plasma membrane"/>
    <property type="evidence" value="ECO:0000314"/>
    <property type="project" value="RGD"/>
</dbReference>
<dbReference type="GO" id="GO:0008514">
    <property type="term" value="F:organic anion transmembrane transporter activity"/>
    <property type="evidence" value="ECO:0000314"/>
    <property type="project" value="RGD"/>
</dbReference>
<dbReference type="GO" id="GO:0019534">
    <property type="term" value="F:toxin transmembrane transporter activity"/>
    <property type="evidence" value="ECO:0000266"/>
    <property type="project" value="RGD"/>
</dbReference>
<dbReference type="GO" id="GO:0006811">
    <property type="term" value="P:monoatomic ion transport"/>
    <property type="evidence" value="ECO:0007669"/>
    <property type="project" value="UniProtKB-KW"/>
</dbReference>
<dbReference type="GO" id="GO:0015711">
    <property type="term" value="P:organic anion transport"/>
    <property type="evidence" value="ECO:0000266"/>
    <property type="project" value="RGD"/>
</dbReference>
<dbReference type="GO" id="GO:0002238">
    <property type="term" value="P:response to molecule of fungal origin"/>
    <property type="evidence" value="ECO:0000314"/>
    <property type="project" value="RGD"/>
</dbReference>
<dbReference type="GO" id="GO:0008202">
    <property type="term" value="P:steroid metabolic process"/>
    <property type="evidence" value="ECO:0000266"/>
    <property type="project" value="RGD"/>
</dbReference>
<dbReference type="GO" id="GO:0035382">
    <property type="term" value="P:sterol transmembrane transport"/>
    <property type="evidence" value="ECO:0000266"/>
    <property type="project" value="RGD"/>
</dbReference>
<dbReference type="FunFam" id="1.20.1250.20:FF:000023">
    <property type="entry name" value="Solute carrier family 22 member 6"/>
    <property type="match status" value="1"/>
</dbReference>
<dbReference type="Gene3D" id="1.20.1250.20">
    <property type="entry name" value="MFS general substrate transporter like domains"/>
    <property type="match status" value="1"/>
</dbReference>
<dbReference type="InterPro" id="IPR020846">
    <property type="entry name" value="MFS_dom"/>
</dbReference>
<dbReference type="InterPro" id="IPR005828">
    <property type="entry name" value="MFS_sugar_transport-like"/>
</dbReference>
<dbReference type="InterPro" id="IPR036259">
    <property type="entry name" value="MFS_trans_sf"/>
</dbReference>
<dbReference type="PANTHER" id="PTHR24064">
    <property type="entry name" value="SOLUTE CARRIER FAMILY 22 MEMBER"/>
    <property type="match status" value="1"/>
</dbReference>
<dbReference type="Pfam" id="PF00083">
    <property type="entry name" value="Sugar_tr"/>
    <property type="match status" value="1"/>
</dbReference>
<dbReference type="SUPFAM" id="SSF103473">
    <property type="entry name" value="MFS general substrate transporter"/>
    <property type="match status" value="1"/>
</dbReference>
<dbReference type="PROSITE" id="PS50850">
    <property type="entry name" value="MFS"/>
    <property type="match status" value="1"/>
</dbReference>
<evidence type="ECO:0000250" key="1">
    <source>
        <dbReference type="UniProtKB" id="Q8N4F4"/>
    </source>
</evidence>
<evidence type="ECO:0000255" key="2"/>
<evidence type="ECO:0000256" key="3">
    <source>
        <dbReference type="SAM" id="MobiDB-lite"/>
    </source>
</evidence>
<evidence type="ECO:0000269" key="4">
    <source>
    </source>
</evidence>
<evidence type="ECO:0000269" key="5">
    <source>
    </source>
</evidence>
<evidence type="ECO:0000303" key="6">
    <source>
    </source>
</evidence>
<evidence type="ECO:0000305" key="7">
    <source>
    </source>
</evidence>
<evidence type="ECO:0000305" key="8">
    <source>
    </source>
</evidence>
<evidence type="ECO:0000312" key="9">
    <source>
        <dbReference type="RGD" id="628885"/>
    </source>
</evidence>
<protein>
    <recommendedName>
        <fullName>Steroid transmembrane transporter SLC22A24</fullName>
    </recommendedName>
    <alternativeName>
        <fullName evidence="6">Organic anion transporter 5</fullName>
        <shortName evidence="6">rOat5</shortName>
    </alternativeName>
    <alternativeName>
        <fullName evidence="9">Solute carrier family 22 member 24</fullName>
    </alternativeName>
</protein>
<sequence length="551" mass="60981">MAFQDLITQIGCLGRFQILHLIFVLICFILVVPHTVLENFTAAIPSHRCWVPILDNNTMSDNNSRILSQDDLLRISIPMDSNLRPEKCRRYIQPQWDLLHLNGTFSTVTEPDTEPCVDGWVYDQSTFLSTTVTQWDLVCGSQTLNSVAKFIYMTGIFIGHLMGGHLSDKFGRKFIVTCGLLTLAVTETSVAFAPTFLIYCSLRFLTGISSSCIRTNSALLILEWTSPKFQAMVMALIFSAGGIGQVLLGVLAFGIRNWQHLQLAMSVPVFFLLIPTRWLSESARWLIITNKPQEGLKELIKVAHINGIKNSRDVLTLEVVKTTMKDELEAAETKPSPLVLFRTPNLRKRICLLSFVRCVSLISTVGLLINLQYLSNKVFLLQCLYGVVCTPANLLGNFSMNYMGRRTTQIIFMSVMGISILSITFLTQEMQIPRLVLASLGGAISSASLTSTAVLSNELVPTVIRATALGVIGIFGSAGAALSPLLMILMTYSASLPWIIYGVLPILSSLVVLLLPETRNQPLPDSIQDVENKRKSSREVKKDAVAKVTPF</sequence>
<name>S22AO_RAT</name>
<reference key="1">
    <citation type="journal article" date="2005" name="J. Pharmacol. Exp. Ther.">
        <title>Functional characterization of rat organic anion transporter 5 (Slc22a19) at the apical membrane of renal proximal tubules.</title>
        <authorList>
            <person name="Anzai N."/>
            <person name="Jutabha P."/>
            <person name="Enomoto A."/>
            <person name="Yokoyama H."/>
            <person name="Nonoguchi H."/>
            <person name="Hirata T."/>
            <person name="Shiraya K."/>
            <person name="He X."/>
            <person name="Cha S.H."/>
            <person name="Takeda M."/>
            <person name="Miyazaki H."/>
            <person name="Sakata T."/>
            <person name="Tomita K."/>
            <person name="Igarashi T."/>
            <person name="Kanai Y."/>
            <person name="Endou H."/>
        </authorList>
    </citation>
    <scope>NUCLEOTIDE SEQUENCE [MRNA]</scope>
    <scope>FUNCTION</scope>
    <scope>TRANSPORTER ACTIVITY</scope>
    <scope>BIOPHYSICOCHEMICAL PROPERTIES</scope>
    <source>
        <strain>Sprague-Dawley</strain>
    </source>
</reference>
<reference key="2">
    <citation type="journal article" date="2004" name="Nature">
        <title>Genome sequence of the Brown Norway rat yields insights into mammalian evolution.</title>
        <authorList>
            <person name="Gibbs R.A."/>
            <person name="Weinstock G.M."/>
            <person name="Metzker M.L."/>
            <person name="Muzny D.M."/>
            <person name="Sodergren E.J."/>
            <person name="Scherer S."/>
            <person name="Scott G."/>
            <person name="Steffen D."/>
            <person name="Worley K.C."/>
            <person name="Burch P.E."/>
            <person name="Okwuonu G."/>
            <person name="Hines S."/>
            <person name="Lewis L."/>
            <person name="Deramo C."/>
            <person name="Delgado O."/>
            <person name="Dugan-Rocha S."/>
            <person name="Miner G."/>
            <person name="Morgan M."/>
            <person name="Hawes A."/>
            <person name="Gill R."/>
            <person name="Holt R.A."/>
            <person name="Adams M.D."/>
            <person name="Amanatides P.G."/>
            <person name="Baden-Tillson H."/>
            <person name="Barnstead M."/>
            <person name="Chin S."/>
            <person name="Evans C.A."/>
            <person name="Ferriera S."/>
            <person name="Fosler C."/>
            <person name="Glodek A."/>
            <person name="Gu Z."/>
            <person name="Jennings D."/>
            <person name="Kraft C.L."/>
            <person name="Nguyen T."/>
            <person name="Pfannkoch C.M."/>
            <person name="Sitter C."/>
            <person name="Sutton G.G."/>
            <person name="Venter J.C."/>
            <person name="Woodage T."/>
            <person name="Smith D."/>
            <person name="Lee H.-M."/>
            <person name="Gustafson E."/>
            <person name="Cahill P."/>
            <person name="Kana A."/>
            <person name="Doucette-Stamm L."/>
            <person name="Weinstock K."/>
            <person name="Fechtel K."/>
            <person name="Weiss R.B."/>
            <person name="Dunn D.M."/>
            <person name="Green E.D."/>
            <person name="Blakesley R.W."/>
            <person name="Bouffard G.G."/>
            <person name="De Jong P.J."/>
            <person name="Osoegawa K."/>
            <person name="Zhu B."/>
            <person name="Marra M."/>
            <person name="Schein J."/>
            <person name="Bosdet I."/>
            <person name="Fjell C."/>
            <person name="Jones S."/>
            <person name="Krzywinski M."/>
            <person name="Mathewson C."/>
            <person name="Siddiqui A."/>
            <person name="Wye N."/>
            <person name="McPherson J."/>
            <person name="Zhao S."/>
            <person name="Fraser C.M."/>
            <person name="Shetty J."/>
            <person name="Shatsman S."/>
            <person name="Geer K."/>
            <person name="Chen Y."/>
            <person name="Abramzon S."/>
            <person name="Nierman W.C."/>
            <person name="Havlak P.H."/>
            <person name="Chen R."/>
            <person name="Durbin K.J."/>
            <person name="Egan A."/>
            <person name="Ren Y."/>
            <person name="Song X.-Z."/>
            <person name="Li B."/>
            <person name="Liu Y."/>
            <person name="Qin X."/>
            <person name="Cawley S."/>
            <person name="Cooney A.J."/>
            <person name="D'Souza L.M."/>
            <person name="Martin K."/>
            <person name="Wu J.Q."/>
            <person name="Gonzalez-Garay M.L."/>
            <person name="Jackson A.R."/>
            <person name="Kalafus K.J."/>
            <person name="McLeod M.P."/>
            <person name="Milosavljevic A."/>
            <person name="Virk D."/>
            <person name="Volkov A."/>
            <person name="Wheeler D.A."/>
            <person name="Zhang Z."/>
            <person name="Bailey J.A."/>
            <person name="Eichler E.E."/>
            <person name="Tuzun E."/>
            <person name="Birney E."/>
            <person name="Mongin E."/>
            <person name="Ureta-Vidal A."/>
            <person name="Woodwark C."/>
            <person name="Zdobnov E."/>
            <person name="Bork P."/>
            <person name="Suyama M."/>
            <person name="Torrents D."/>
            <person name="Alexandersson M."/>
            <person name="Trask B.J."/>
            <person name="Young J.M."/>
            <person name="Huang H."/>
            <person name="Wang H."/>
            <person name="Xing H."/>
            <person name="Daniels S."/>
            <person name="Gietzen D."/>
            <person name="Schmidt J."/>
            <person name="Stevens K."/>
            <person name="Vitt U."/>
            <person name="Wingrove J."/>
            <person name="Camara F."/>
            <person name="Mar Alba M."/>
            <person name="Abril J.F."/>
            <person name="Guigo R."/>
            <person name="Smit A."/>
            <person name="Dubchak I."/>
            <person name="Rubin E.M."/>
            <person name="Couronne O."/>
            <person name="Poliakov A."/>
            <person name="Huebner N."/>
            <person name="Ganten D."/>
            <person name="Goesele C."/>
            <person name="Hummel O."/>
            <person name="Kreitler T."/>
            <person name="Lee Y.-A."/>
            <person name="Monti J."/>
            <person name="Schulz H."/>
            <person name="Zimdahl H."/>
            <person name="Himmelbauer H."/>
            <person name="Lehrach H."/>
            <person name="Jacob H.J."/>
            <person name="Bromberg S."/>
            <person name="Gullings-Handley J."/>
            <person name="Jensen-Seaman M.I."/>
            <person name="Kwitek A.E."/>
            <person name="Lazar J."/>
            <person name="Pasko D."/>
            <person name="Tonellato P.J."/>
            <person name="Twigger S."/>
            <person name="Ponting C.P."/>
            <person name="Duarte J.M."/>
            <person name="Rice S."/>
            <person name="Goodstadt L."/>
            <person name="Beatson S.A."/>
            <person name="Emes R.D."/>
            <person name="Winter E.E."/>
            <person name="Webber C."/>
            <person name="Brandt P."/>
            <person name="Nyakatura G."/>
            <person name="Adetobi M."/>
            <person name="Chiaromonte F."/>
            <person name="Elnitski L."/>
            <person name="Eswara P."/>
            <person name="Hardison R.C."/>
            <person name="Hou M."/>
            <person name="Kolbe D."/>
            <person name="Makova K."/>
            <person name="Miller W."/>
            <person name="Nekrutenko A."/>
            <person name="Riemer C."/>
            <person name="Schwartz S."/>
            <person name="Taylor J."/>
            <person name="Yang S."/>
            <person name="Zhang Y."/>
            <person name="Lindpaintner K."/>
            <person name="Andrews T.D."/>
            <person name="Caccamo M."/>
            <person name="Clamp M."/>
            <person name="Clarke L."/>
            <person name="Curwen V."/>
            <person name="Durbin R.M."/>
            <person name="Eyras E."/>
            <person name="Searle S.M."/>
            <person name="Cooper G.M."/>
            <person name="Batzoglou S."/>
            <person name="Brudno M."/>
            <person name="Sidow A."/>
            <person name="Stone E.A."/>
            <person name="Payseur B.A."/>
            <person name="Bourque G."/>
            <person name="Lopez-Otin C."/>
            <person name="Puente X.S."/>
            <person name="Chakrabarti K."/>
            <person name="Chatterji S."/>
            <person name="Dewey C."/>
            <person name="Pachter L."/>
            <person name="Bray N."/>
            <person name="Yap V.B."/>
            <person name="Caspi A."/>
            <person name="Tesler G."/>
            <person name="Pevzner P.A."/>
            <person name="Haussler D."/>
            <person name="Roskin K.M."/>
            <person name="Baertsch R."/>
            <person name="Clawson H."/>
            <person name="Furey T.S."/>
            <person name="Hinrichs A.S."/>
            <person name="Karolchik D."/>
            <person name="Kent W.J."/>
            <person name="Rosenbloom K.R."/>
            <person name="Trumbower H."/>
            <person name="Weirauch M."/>
            <person name="Cooper D.N."/>
            <person name="Stenson P.D."/>
            <person name="Ma B."/>
            <person name="Brent M."/>
            <person name="Arumugam M."/>
            <person name="Shteynberg D."/>
            <person name="Copley R.R."/>
            <person name="Taylor M.S."/>
            <person name="Riethman H."/>
            <person name="Mudunuri U."/>
            <person name="Peterson J."/>
            <person name="Guyer M."/>
            <person name="Felsenfeld A."/>
            <person name="Old S."/>
            <person name="Mockrin S."/>
            <person name="Collins F.S."/>
        </authorList>
    </citation>
    <scope>NUCLEOTIDE SEQUENCE [LARGE SCALE GENOMIC DNA]</scope>
    <source>
        <strain>Brown Norway</strain>
    </source>
</reference>
<reference key="3">
    <citation type="submission" date="2005-07" db="EMBL/GenBank/DDBJ databases">
        <authorList>
            <person name="Mural R.J."/>
            <person name="Adams M.D."/>
            <person name="Myers E.W."/>
            <person name="Smith H.O."/>
            <person name="Venter J.C."/>
        </authorList>
    </citation>
    <scope>NUCLEOTIDE SEQUENCE [LARGE SCALE GENOMIC DNA]</scope>
</reference>
<reference key="4">
    <citation type="journal article" date="2019" name="PLoS Genet.">
        <title>Unraveling the functional role of the orphan solute carrier, SLC22A24 in the transport of steroid conjugates through metabolomic and genome-wide association studies.</title>
        <authorList>
            <person name="Yee S.W."/>
            <person name="Stecula A."/>
            <person name="Chien H.C."/>
            <person name="Zou L."/>
            <person name="Feofanova E.V."/>
            <person name="van Borselen M."/>
            <person name="Cheung K.W.K."/>
            <person name="Yousri N.A."/>
            <person name="Suhre K."/>
            <person name="Kinchen J.M."/>
            <person name="Boerwinkle E."/>
            <person name="Irannejad R."/>
            <person name="Yu B."/>
            <person name="Giacomini K.M."/>
        </authorList>
    </citation>
    <scope>FUNCTION</scope>
    <scope>TRANSPORTER ACTIVITY</scope>
</reference>
<gene>
    <name evidence="9" type="primary">Slc22a24</name>
    <name evidence="9" type="synonym">Slc22a19</name>
    <name evidence="9" type="synonym">Slc22a9</name>
</gene>
<organism>
    <name type="scientific">Rattus norvegicus</name>
    <name type="common">Rat</name>
    <dbReference type="NCBI Taxonomy" id="10116"/>
    <lineage>
        <taxon>Eukaryota</taxon>
        <taxon>Metazoa</taxon>
        <taxon>Chordata</taxon>
        <taxon>Craniata</taxon>
        <taxon>Vertebrata</taxon>
        <taxon>Euteleostomi</taxon>
        <taxon>Mammalia</taxon>
        <taxon>Eutheria</taxon>
        <taxon>Euarchontoglires</taxon>
        <taxon>Glires</taxon>
        <taxon>Rodentia</taxon>
        <taxon>Myomorpha</taxon>
        <taxon>Muroidea</taxon>
        <taxon>Muridae</taxon>
        <taxon>Murinae</taxon>
        <taxon>Rattus</taxon>
    </lineage>
</organism>
<proteinExistence type="evidence at protein level"/>
<feature type="chain" id="PRO_0000456645" description="Steroid transmembrane transporter SLC22A24">
    <location>
        <begin position="1"/>
        <end position="551"/>
    </location>
</feature>
<feature type="transmembrane region" description="Helical" evidence="2">
    <location>
        <begin position="16"/>
        <end position="36"/>
    </location>
</feature>
<feature type="transmembrane region" description="Helical" evidence="2">
    <location>
        <begin position="146"/>
        <end position="166"/>
    </location>
</feature>
<feature type="transmembrane region" description="Helical" evidence="2">
    <location>
        <begin position="174"/>
        <end position="194"/>
    </location>
</feature>
<feature type="transmembrane region" description="Helical" evidence="2">
    <location>
        <begin position="204"/>
        <end position="222"/>
    </location>
</feature>
<feature type="transmembrane region" description="Helical" evidence="2">
    <location>
        <begin position="235"/>
        <end position="255"/>
    </location>
</feature>
<feature type="transmembrane region" description="Helical" evidence="2">
    <location>
        <begin position="260"/>
        <end position="280"/>
    </location>
</feature>
<feature type="transmembrane region" description="Helical" evidence="2">
    <location>
        <begin position="350"/>
        <end position="370"/>
    </location>
</feature>
<feature type="transmembrane region" description="Helical" evidence="2">
    <location>
        <begin position="378"/>
        <end position="398"/>
    </location>
</feature>
<feature type="transmembrane region" description="Helical" evidence="2">
    <location>
        <begin position="410"/>
        <end position="430"/>
    </location>
</feature>
<feature type="transmembrane region" description="Helical" evidence="2">
    <location>
        <begin position="435"/>
        <end position="455"/>
    </location>
</feature>
<feature type="transmembrane region" description="Helical" evidence="2">
    <location>
        <begin position="469"/>
        <end position="489"/>
    </location>
</feature>
<feature type="transmembrane region" description="Helical" evidence="2">
    <location>
        <begin position="496"/>
        <end position="516"/>
    </location>
</feature>
<feature type="region of interest" description="Disordered" evidence="3">
    <location>
        <begin position="524"/>
        <end position="551"/>
    </location>
</feature>
<feature type="compositionally biased region" description="Basic and acidic residues" evidence="3">
    <location>
        <begin position="530"/>
        <end position="545"/>
    </location>
</feature>
<keyword id="KW-1003">Cell membrane</keyword>
<keyword id="KW-0406">Ion transport</keyword>
<keyword id="KW-0443">Lipid metabolism</keyword>
<keyword id="KW-0445">Lipid transport</keyword>
<keyword id="KW-0472">Membrane</keyword>
<keyword id="KW-1185">Reference proteome</keyword>
<keyword id="KW-0753">Steroid metabolism</keyword>
<keyword id="KW-0812">Transmembrane</keyword>
<keyword id="KW-1133">Transmembrane helix</keyword>
<keyword id="KW-0813">Transport</keyword>